<feature type="signal peptide" evidence="2">
    <location>
        <begin position="1"/>
        <end position="25"/>
    </location>
</feature>
<feature type="chain" id="PRO_0000320645" description="Pentraxin-4">
    <location>
        <begin position="26"/>
        <end position="478"/>
    </location>
</feature>
<feature type="domain" description="Pentraxin (PTX)" evidence="3">
    <location>
        <begin position="269"/>
        <end position="473"/>
    </location>
</feature>
<feature type="region of interest" description="Disordered" evidence="4">
    <location>
        <begin position="208"/>
        <end position="262"/>
    </location>
</feature>
<feature type="compositionally biased region" description="Basic and acidic residues" evidence="4">
    <location>
        <begin position="208"/>
        <end position="222"/>
    </location>
</feature>
<feature type="binding site" evidence="3">
    <location>
        <position position="322"/>
    </location>
    <ligand>
        <name>Ca(2+)</name>
        <dbReference type="ChEBI" id="CHEBI:29108"/>
        <label>1</label>
    </ligand>
</feature>
<feature type="binding site" evidence="3">
    <location>
        <position position="323"/>
    </location>
    <ligand>
        <name>Ca(2+)</name>
        <dbReference type="ChEBI" id="CHEBI:29108"/>
        <label>1</label>
    </ligand>
</feature>
<feature type="binding site" evidence="3">
    <location>
        <position position="406"/>
    </location>
    <ligand>
        <name>Ca(2+)</name>
        <dbReference type="ChEBI" id="CHEBI:29108"/>
        <label>1</label>
    </ligand>
</feature>
<feature type="binding site" evidence="1">
    <location>
        <position position="406"/>
    </location>
    <ligand>
        <name>Ca(2+)</name>
        <dbReference type="ChEBI" id="CHEBI:29108"/>
        <label>2</label>
    </ligand>
</feature>
<feature type="binding site" evidence="3">
    <location>
        <position position="407"/>
    </location>
    <ligand>
        <name>Ca(2+)</name>
        <dbReference type="ChEBI" id="CHEBI:29108"/>
        <label>1</label>
    </ligand>
</feature>
<feature type="binding site" evidence="3">
    <location>
        <position position="408"/>
    </location>
    <ligand>
        <name>Ca(2+)</name>
        <dbReference type="ChEBI" id="CHEBI:29108"/>
        <label>1</label>
    </ligand>
</feature>
<feature type="binding site" evidence="1">
    <location>
        <position position="408"/>
    </location>
    <ligand>
        <name>Ca(2+)</name>
        <dbReference type="ChEBI" id="CHEBI:29108"/>
        <label>2</label>
    </ligand>
</feature>
<feature type="glycosylation site" description="N-linked (GlcNAc...) asparagine" evidence="2">
    <location>
        <position position="67"/>
    </location>
</feature>
<feature type="glycosylation site" description="N-linked (GlcNAc...) asparagine" evidence="2">
    <location>
        <position position="91"/>
    </location>
</feature>
<feature type="disulfide bond" evidence="3">
    <location>
        <begin position="300"/>
        <end position="364"/>
    </location>
</feature>
<feature type="splice variant" id="VSP_040203" description="In isoform 1." evidence="6">
    <original>MGCSWRKTLSFFLVFVPIYLHGASSQEAAPVGPRKPFFERLRRLEEQ</original>
    <variation>MGSGNWEVTGPPCGSRCERPPGLPRGVHGQFRSAVGLSGLRW</variation>
    <location>
        <begin position="1"/>
        <end position="47"/>
    </location>
</feature>
<feature type="sequence variant" id="VAR_060084" description="In dbSNP:rs2745103.">
    <original>G</original>
    <variation>E</variation>
    <location>
        <position position="2"/>
    </location>
</feature>
<feature type="sequence variant" id="VAR_039249" description="In dbSNP:rs2745101.">
    <original>R</original>
    <variation>W</variation>
    <location>
        <position position="92"/>
    </location>
</feature>
<feature type="sequence variant" id="VAR_039250" description="In dbSNP:rs2667673.">
    <original>R</original>
    <variation>G</variation>
    <location>
        <position position="220"/>
    </location>
</feature>
<feature type="sequence variant" id="VAR_039251" description="In dbSNP:rs12445920.">
    <original>R</original>
    <variation>Q</variation>
    <location>
        <position position="234"/>
    </location>
</feature>
<feature type="sequence variant" id="VAR_039252" description="In dbSNP:rs2745098.">
    <original>R</original>
    <variation>K</variation>
    <location>
        <position position="281"/>
    </location>
</feature>
<feature type="sequence variant" id="VAR_039253" description="In dbSNP:rs13332460.">
    <original>A</original>
    <variation>S</variation>
    <location>
        <position position="317"/>
    </location>
</feature>
<feature type="sequence variant" id="VAR_062130" description="In dbSNP:rs59554810.">
    <original>I</original>
    <variation>V</variation>
    <location>
        <position position="444"/>
    </location>
</feature>
<dbReference type="EMBL" id="AL031705">
    <property type="status" value="NOT_ANNOTATED_CDS"/>
    <property type="molecule type" value="Genomic_DNA"/>
</dbReference>
<dbReference type="EMBL" id="AE006467">
    <property type="protein sequence ID" value="AAK61283.1"/>
    <property type="molecule type" value="Genomic_DNA"/>
</dbReference>
<dbReference type="EMBL" id="CH471112">
    <property type="protein sequence ID" value="EAW85652.1"/>
    <property type="molecule type" value="Genomic_DNA"/>
</dbReference>
<dbReference type="EMBL" id="BC156066">
    <property type="protein sequence ID" value="AAI56067.1"/>
    <property type="molecule type" value="mRNA"/>
</dbReference>
<dbReference type="EMBL" id="BC156944">
    <property type="protein sequence ID" value="AAI56945.1"/>
    <property type="molecule type" value="mRNA"/>
</dbReference>
<dbReference type="CCDS" id="CCDS32362.1">
    <molecule id="Q96A99-2"/>
</dbReference>
<dbReference type="CCDS" id="CCDS86492.1">
    <molecule id="Q96A99-1"/>
</dbReference>
<dbReference type="RefSeq" id="NP_001013680.1">
    <molecule id="Q96A99-2"/>
    <property type="nucleotide sequence ID" value="NM_001013658.1"/>
</dbReference>
<dbReference type="RefSeq" id="NP_001315537.1">
    <molecule id="Q96A99-1"/>
    <property type="nucleotide sequence ID" value="NM_001328608.2"/>
</dbReference>
<dbReference type="SMR" id="Q96A99"/>
<dbReference type="BioGRID" id="133654">
    <property type="interactions" value="52"/>
</dbReference>
<dbReference type="FunCoup" id="Q96A99">
    <property type="interactions" value="3"/>
</dbReference>
<dbReference type="IntAct" id="Q96A99">
    <property type="interactions" value="3"/>
</dbReference>
<dbReference type="STRING" id="9606.ENSP00000445277"/>
<dbReference type="GlyCosmos" id="Q96A99">
    <property type="glycosylation" value="2 sites, No reported glycans"/>
</dbReference>
<dbReference type="GlyGen" id="Q96A99">
    <property type="glycosylation" value="4 sites"/>
</dbReference>
<dbReference type="BioMuta" id="PTX4"/>
<dbReference type="DMDM" id="189042530"/>
<dbReference type="MassIVE" id="Q96A99"/>
<dbReference type="PaxDb" id="9606-ENSP00000293922"/>
<dbReference type="PeptideAtlas" id="Q96A99"/>
<dbReference type="ProteomicsDB" id="75939">
    <molecule id="Q96A99-1"/>
</dbReference>
<dbReference type="ProteomicsDB" id="75940">
    <molecule id="Q96A99-2"/>
</dbReference>
<dbReference type="Antibodypedia" id="67891">
    <property type="antibodies" value="17 antibodies from 8 providers"/>
</dbReference>
<dbReference type="DNASU" id="390667"/>
<dbReference type="Ensembl" id="ENST00000293922.1">
    <molecule id="Q96A99-2"/>
    <property type="protein sequence ID" value="ENSP00000293922.1"/>
    <property type="gene ID" value="ENSG00000251692.8"/>
</dbReference>
<dbReference type="Ensembl" id="ENST00000447419.7">
    <molecule id="Q96A99-1"/>
    <property type="protein sequence ID" value="ENSP00000445277.2"/>
    <property type="gene ID" value="ENSG00000251692.8"/>
</dbReference>
<dbReference type="GeneID" id="390667"/>
<dbReference type="KEGG" id="hsa:390667"/>
<dbReference type="MANE-Select" id="ENST00000447419.7">
    <property type="protein sequence ID" value="ENSP00000445277.2"/>
    <property type="RefSeq nucleotide sequence ID" value="NM_001328608.2"/>
    <property type="RefSeq protein sequence ID" value="NP_001315537.1"/>
</dbReference>
<dbReference type="UCSC" id="uc010uvf.2">
    <molecule id="Q96A99-1"/>
    <property type="organism name" value="human"/>
</dbReference>
<dbReference type="AGR" id="HGNC:14171"/>
<dbReference type="CTD" id="390667"/>
<dbReference type="GeneCards" id="PTX4"/>
<dbReference type="HGNC" id="HGNC:14171">
    <property type="gene designation" value="PTX4"/>
</dbReference>
<dbReference type="HPA" id="ENSG00000251692">
    <property type="expression patterns" value="Not detected"/>
</dbReference>
<dbReference type="MIM" id="613442">
    <property type="type" value="gene"/>
</dbReference>
<dbReference type="neXtProt" id="NX_Q96A99"/>
<dbReference type="OpenTargets" id="ENSG00000251692"/>
<dbReference type="PharmGKB" id="PA25553"/>
<dbReference type="VEuPathDB" id="HostDB:ENSG00000251692"/>
<dbReference type="eggNOG" id="ENOG502QTID">
    <property type="taxonomic scope" value="Eukaryota"/>
</dbReference>
<dbReference type="GeneTree" id="ENSGT01060000248575"/>
<dbReference type="HOGENOM" id="CLU_044996_0_0_1"/>
<dbReference type="InParanoid" id="Q96A99"/>
<dbReference type="OMA" id="CSWVRTS"/>
<dbReference type="OrthoDB" id="8793160at2759"/>
<dbReference type="PAN-GO" id="Q96A99">
    <property type="GO annotations" value="0 GO annotations based on evolutionary models"/>
</dbReference>
<dbReference type="PhylomeDB" id="Q96A99"/>
<dbReference type="TreeFam" id="TF330208"/>
<dbReference type="PathwayCommons" id="Q96A99"/>
<dbReference type="SignaLink" id="Q96A99"/>
<dbReference type="BioGRID-ORCS" id="390667">
    <property type="hits" value="17 hits in 1145 CRISPR screens"/>
</dbReference>
<dbReference type="GenomeRNAi" id="390667"/>
<dbReference type="Pharos" id="Q96A99">
    <property type="development level" value="Tdark"/>
</dbReference>
<dbReference type="PRO" id="PR:Q96A99"/>
<dbReference type="Proteomes" id="UP000005640">
    <property type="component" value="Chromosome 16"/>
</dbReference>
<dbReference type="RNAct" id="Q96A99">
    <property type="molecule type" value="protein"/>
</dbReference>
<dbReference type="Bgee" id="ENSG00000251692">
    <property type="expression patterns" value="Expressed in male germ line stem cell (sensu Vertebrata) in testis and 50 other cell types or tissues"/>
</dbReference>
<dbReference type="ExpressionAtlas" id="Q96A99">
    <property type="expression patterns" value="baseline and differential"/>
</dbReference>
<dbReference type="GO" id="GO:0005576">
    <property type="term" value="C:extracellular region"/>
    <property type="evidence" value="ECO:0007669"/>
    <property type="project" value="UniProtKB-SubCell"/>
</dbReference>
<dbReference type="GO" id="GO:0046872">
    <property type="term" value="F:metal ion binding"/>
    <property type="evidence" value="ECO:0007669"/>
    <property type="project" value="UniProtKB-KW"/>
</dbReference>
<dbReference type="CDD" id="cd00152">
    <property type="entry name" value="PTX"/>
    <property type="match status" value="1"/>
</dbReference>
<dbReference type="Gene3D" id="2.60.120.200">
    <property type="match status" value="1"/>
</dbReference>
<dbReference type="InterPro" id="IPR013320">
    <property type="entry name" value="ConA-like_dom_sf"/>
</dbReference>
<dbReference type="InterPro" id="IPR051360">
    <property type="entry name" value="Neuronal_Pentraxin_Related"/>
</dbReference>
<dbReference type="InterPro" id="IPR001759">
    <property type="entry name" value="Pentraxin-related"/>
</dbReference>
<dbReference type="PANTHER" id="PTHR19277">
    <property type="entry name" value="PENTRAXIN"/>
    <property type="match status" value="1"/>
</dbReference>
<dbReference type="PANTHER" id="PTHR19277:SF122">
    <property type="entry name" value="PENTRAXIN-4"/>
    <property type="match status" value="1"/>
</dbReference>
<dbReference type="Pfam" id="PF00354">
    <property type="entry name" value="Pentaxin"/>
    <property type="match status" value="1"/>
</dbReference>
<dbReference type="PRINTS" id="PR00895">
    <property type="entry name" value="PENTAXIN"/>
</dbReference>
<dbReference type="SMART" id="SM00159">
    <property type="entry name" value="PTX"/>
    <property type="match status" value="1"/>
</dbReference>
<dbReference type="SUPFAM" id="SSF49899">
    <property type="entry name" value="Concanavalin A-like lectins/glucanases"/>
    <property type="match status" value="1"/>
</dbReference>
<dbReference type="PROSITE" id="PS51828">
    <property type="entry name" value="PTX_2"/>
    <property type="match status" value="1"/>
</dbReference>
<accession>Q96A99</accession>
<name>PTX4_HUMAN</name>
<keyword id="KW-0025">Alternative splicing</keyword>
<keyword id="KW-0106">Calcium</keyword>
<keyword id="KW-1015">Disulfide bond</keyword>
<keyword id="KW-0325">Glycoprotein</keyword>
<keyword id="KW-0479">Metal-binding</keyword>
<keyword id="KW-1185">Reference proteome</keyword>
<keyword id="KW-0964">Secreted</keyword>
<keyword id="KW-0732">Signal</keyword>
<gene>
    <name type="primary">PTX4</name>
    <name type="synonym">C16orf38</name>
</gene>
<evidence type="ECO:0000250" key="1"/>
<evidence type="ECO:0000255" key="2"/>
<evidence type="ECO:0000255" key="3">
    <source>
        <dbReference type="PROSITE-ProRule" id="PRU01172"/>
    </source>
</evidence>
<evidence type="ECO:0000256" key="4">
    <source>
        <dbReference type="SAM" id="MobiDB-lite"/>
    </source>
</evidence>
<evidence type="ECO:0000269" key="5">
    <source>
    </source>
</evidence>
<evidence type="ECO:0000303" key="6">
    <source>
    </source>
</evidence>
<evidence type="ECO:0000305" key="7"/>
<evidence type="ECO:0000305" key="8">
    <source>
    </source>
</evidence>
<comment type="cofactor">
    <cofactor evidence="1">
        <name>Ca(2+)</name>
        <dbReference type="ChEBI" id="CHEBI:29108"/>
    </cofactor>
    <text evidence="1">Binds 2 calcium ions per subunit.</text>
</comment>
<comment type="subcellular location">
    <subcellularLocation>
        <location evidence="7">Secreted</location>
    </subcellularLocation>
</comment>
<comment type="alternative products">
    <event type="alternative splicing"/>
    <isoform>
        <id>Q96A99-1</id>
        <name>2</name>
        <name>PTX4(2)</name>
        <sequence type="displayed"/>
    </isoform>
    <isoform>
        <id>Q96A99-2</id>
        <name>1</name>
        <name>PTX4(1)</name>
        <name>Long</name>
        <sequence type="described" ref="VSP_040203"/>
    </isoform>
</comment>
<comment type="tissue specificity">
    <text evidence="5">Widely expressed at low levels with highest levels in small intestine, testis and brain. Very low expression in endothelial cells, monocytes, neutrophils and lymphocytes. Isoform 1 is not expressed in small intestine.</text>
</comment>
<comment type="induction">
    <text evidence="5">Not induced by bacterial lipopolysaccharideS (LPS) or IL1/interleukin-1 in endothelium, monocytes or neutrophils. Not induced by PHA in lymphocytes.</text>
</comment>
<comment type="miscellaneous">
    <molecule>Isoform 1</molecule>
    <text evidence="8">Not expressed in small intestine.</text>
</comment>
<sequence length="478" mass="52339">MGCSWRKTLSFFLVFVPIYLHGASSQEAAPVGPRKPFFERLRRLEEQFRRFQEVTWTHLQNIASNYNVSYNVDVRFRSLAEESQAVAQAVNRSQASVQGELAQLKAWVRKLQRRGRKVDTRLRALDLTLGERSQQRARERKAHKAQRDALQDSLARLEGLVHSQGARLAALEGRLPVAHPGTAALGPALVPTPTQPEELGPTSLKLQRDRQELRAASEHRGPPQDSSAPLQGRREPPASGSHRVLSGTAPKDPRQQAWSPQVPGEICGVGPTLVFPNASTRNVVFLSPGFVTALRALSFCSWVRTASGRLGTLLSYATEDNDNKLVLHGRDSLLPGSIHFVIGDPAFRELPLQLLLDGQWHHICVIWTSTQGRYWLHVDRRLVATGSRFREGYEIPPGGSLVLGQEQDSVGGGFDSSEAFVGSMSGLAIWDRALVPGEVANLAIGKEFPTGAILTLANAALAGGFVQGANCTCLERCP</sequence>
<protein>
    <recommendedName>
        <fullName>Pentraxin-4</fullName>
    </recommendedName>
</protein>
<proteinExistence type="evidence at transcript level"/>
<organism>
    <name type="scientific">Homo sapiens</name>
    <name type="common">Human</name>
    <dbReference type="NCBI Taxonomy" id="9606"/>
    <lineage>
        <taxon>Eukaryota</taxon>
        <taxon>Metazoa</taxon>
        <taxon>Chordata</taxon>
        <taxon>Craniata</taxon>
        <taxon>Vertebrata</taxon>
        <taxon>Euteleostomi</taxon>
        <taxon>Mammalia</taxon>
        <taxon>Eutheria</taxon>
        <taxon>Euarchontoglires</taxon>
        <taxon>Primates</taxon>
        <taxon>Haplorrhini</taxon>
        <taxon>Catarrhini</taxon>
        <taxon>Hominidae</taxon>
        <taxon>Homo</taxon>
    </lineage>
</organism>
<reference key="1">
    <citation type="journal article" date="2004" name="Nature">
        <title>The sequence and analysis of duplication-rich human chromosome 16.</title>
        <authorList>
            <person name="Martin J."/>
            <person name="Han C."/>
            <person name="Gordon L.A."/>
            <person name="Terry A."/>
            <person name="Prabhakar S."/>
            <person name="She X."/>
            <person name="Xie G."/>
            <person name="Hellsten U."/>
            <person name="Chan Y.M."/>
            <person name="Altherr M."/>
            <person name="Couronne O."/>
            <person name="Aerts A."/>
            <person name="Bajorek E."/>
            <person name="Black S."/>
            <person name="Blumer H."/>
            <person name="Branscomb E."/>
            <person name="Brown N.C."/>
            <person name="Bruno W.J."/>
            <person name="Buckingham J.M."/>
            <person name="Callen D.F."/>
            <person name="Campbell C.S."/>
            <person name="Campbell M.L."/>
            <person name="Campbell E.W."/>
            <person name="Caoile C."/>
            <person name="Challacombe J.F."/>
            <person name="Chasteen L.A."/>
            <person name="Chertkov O."/>
            <person name="Chi H.C."/>
            <person name="Christensen M."/>
            <person name="Clark L.M."/>
            <person name="Cohn J.D."/>
            <person name="Denys M."/>
            <person name="Detter J.C."/>
            <person name="Dickson M."/>
            <person name="Dimitrijevic-Bussod M."/>
            <person name="Escobar J."/>
            <person name="Fawcett J.J."/>
            <person name="Flowers D."/>
            <person name="Fotopulos D."/>
            <person name="Glavina T."/>
            <person name="Gomez M."/>
            <person name="Gonzales E."/>
            <person name="Goodstein D."/>
            <person name="Goodwin L.A."/>
            <person name="Grady D.L."/>
            <person name="Grigoriev I."/>
            <person name="Groza M."/>
            <person name="Hammon N."/>
            <person name="Hawkins T."/>
            <person name="Haydu L."/>
            <person name="Hildebrand C.E."/>
            <person name="Huang W."/>
            <person name="Israni S."/>
            <person name="Jett J."/>
            <person name="Jewett P.B."/>
            <person name="Kadner K."/>
            <person name="Kimball H."/>
            <person name="Kobayashi A."/>
            <person name="Krawczyk M.-C."/>
            <person name="Leyba T."/>
            <person name="Longmire J.L."/>
            <person name="Lopez F."/>
            <person name="Lou Y."/>
            <person name="Lowry S."/>
            <person name="Ludeman T."/>
            <person name="Manohar C.F."/>
            <person name="Mark G.A."/>
            <person name="McMurray K.L."/>
            <person name="Meincke L.J."/>
            <person name="Morgan J."/>
            <person name="Moyzis R.K."/>
            <person name="Mundt M.O."/>
            <person name="Munk A.C."/>
            <person name="Nandkeshwar R.D."/>
            <person name="Pitluck S."/>
            <person name="Pollard M."/>
            <person name="Predki P."/>
            <person name="Parson-Quintana B."/>
            <person name="Ramirez L."/>
            <person name="Rash S."/>
            <person name="Retterer J."/>
            <person name="Ricke D.O."/>
            <person name="Robinson D.L."/>
            <person name="Rodriguez A."/>
            <person name="Salamov A."/>
            <person name="Saunders E.H."/>
            <person name="Scott D."/>
            <person name="Shough T."/>
            <person name="Stallings R.L."/>
            <person name="Stalvey M."/>
            <person name="Sutherland R.D."/>
            <person name="Tapia R."/>
            <person name="Tesmer J.G."/>
            <person name="Thayer N."/>
            <person name="Thompson L.S."/>
            <person name="Tice H."/>
            <person name="Torney D.C."/>
            <person name="Tran-Gyamfi M."/>
            <person name="Tsai M."/>
            <person name="Ulanovsky L.E."/>
            <person name="Ustaszewska A."/>
            <person name="Vo N."/>
            <person name="White P.S."/>
            <person name="Williams A.L."/>
            <person name="Wills P.L."/>
            <person name="Wu J.-R."/>
            <person name="Wu K."/>
            <person name="Yang J."/>
            <person name="DeJong P."/>
            <person name="Bruce D."/>
            <person name="Doggett N.A."/>
            <person name="Deaven L."/>
            <person name="Schmutz J."/>
            <person name="Grimwood J."/>
            <person name="Richardson P."/>
            <person name="Rokhsar D.S."/>
            <person name="Eichler E.E."/>
            <person name="Gilna P."/>
            <person name="Lucas S.M."/>
            <person name="Myers R.M."/>
            <person name="Rubin E.M."/>
            <person name="Pennacchio L.A."/>
        </authorList>
    </citation>
    <scope>NUCLEOTIDE SEQUENCE [LARGE SCALE GENOMIC DNA]</scope>
</reference>
<reference key="2">
    <citation type="journal article" date="2001" name="Hum. Mol. Genet.">
        <title>Sequence, structure and pathology of the fully annotated terminal 2 Mb of the short arm of human chromosome 16.</title>
        <authorList>
            <person name="Daniels R.J."/>
            <person name="Peden J.F."/>
            <person name="Lloyd C."/>
            <person name="Horsley S.W."/>
            <person name="Clark K."/>
            <person name="Tufarelli C."/>
            <person name="Kearney L."/>
            <person name="Buckle V.J."/>
            <person name="Doggett N.A."/>
            <person name="Flint J."/>
            <person name="Higgs D.R."/>
        </authorList>
    </citation>
    <scope>NUCLEOTIDE SEQUENCE [LARGE SCALE GENOMIC DNA]</scope>
</reference>
<reference key="3">
    <citation type="submission" date="2005-07" db="EMBL/GenBank/DDBJ databases">
        <authorList>
            <person name="Mural R.J."/>
            <person name="Istrail S."/>
            <person name="Sutton G.G."/>
            <person name="Florea L."/>
            <person name="Halpern A.L."/>
            <person name="Mobarry C.M."/>
            <person name="Lippert R."/>
            <person name="Walenz B."/>
            <person name="Shatkay H."/>
            <person name="Dew I."/>
            <person name="Miller J.R."/>
            <person name="Flanigan M.J."/>
            <person name="Edwards N.J."/>
            <person name="Bolanos R."/>
            <person name="Fasulo D."/>
            <person name="Halldorsson B.V."/>
            <person name="Hannenhalli S."/>
            <person name="Turner R."/>
            <person name="Yooseph S."/>
            <person name="Lu F."/>
            <person name="Nusskern D.R."/>
            <person name="Shue B.C."/>
            <person name="Zheng X.H."/>
            <person name="Zhong F."/>
            <person name="Delcher A.L."/>
            <person name="Huson D.H."/>
            <person name="Kravitz S.A."/>
            <person name="Mouchard L."/>
            <person name="Reinert K."/>
            <person name="Remington K.A."/>
            <person name="Clark A.G."/>
            <person name="Waterman M.S."/>
            <person name="Eichler E.E."/>
            <person name="Adams M.D."/>
            <person name="Hunkapiller M.W."/>
            <person name="Myers E.W."/>
            <person name="Venter J.C."/>
        </authorList>
    </citation>
    <scope>NUCLEOTIDE SEQUENCE [LARGE SCALE GENOMIC DNA]</scope>
</reference>
<reference key="4">
    <citation type="journal article" date="2004" name="Genome Res.">
        <title>The status, quality, and expansion of the NIH full-length cDNA project: the Mammalian Gene Collection (MGC).</title>
        <authorList>
            <consortium name="The MGC Project Team"/>
        </authorList>
    </citation>
    <scope>NUCLEOTIDE SEQUENCE [LARGE SCALE MRNA] (ISOFORM 1)</scope>
</reference>
<reference key="5">
    <citation type="journal article" date="2010" name="J. Immunol.">
        <title>Evolution of the pentraxin family: the new entry PTX4.</title>
        <authorList>
            <person name="Martinez de la Torre Y."/>
            <person name="Fabbri M."/>
            <person name="Jaillon S."/>
            <person name="Bastone A."/>
            <person name="Nebuloni M."/>
            <person name="Vecchi A."/>
            <person name="Mantovani A."/>
            <person name="Garlanda C."/>
        </authorList>
    </citation>
    <scope>IDENTIFICATION</scope>
    <scope>TISSUE SPECIFICITY</scope>
    <scope>ALTERNATIVE SPLICING</scope>
    <scope>INDUCTION</scope>
</reference>